<feature type="chain" id="PRO_1000097316" description="Peptide deformylase">
    <location>
        <begin position="1"/>
        <end position="175"/>
    </location>
</feature>
<feature type="active site" evidence="1">
    <location>
        <position position="139"/>
    </location>
</feature>
<feature type="binding site" evidence="1">
    <location>
        <position position="96"/>
    </location>
    <ligand>
        <name>Fe cation</name>
        <dbReference type="ChEBI" id="CHEBI:24875"/>
    </ligand>
</feature>
<feature type="binding site" evidence="1">
    <location>
        <position position="138"/>
    </location>
    <ligand>
        <name>Fe cation</name>
        <dbReference type="ChEBI" id="CHEBI:24875"/>
    </ligand>
</feature>
<feature type="binding site" evidence="1">
    <location>
        <position position="142"/>
    </location>
    <ligand>
        <name>Fe cation</name>
        <dbReference type="ChEBI" id="CHEBI:24875"/>
    </ligand>
</feature>
<gene>
    <name evidence="1" type="primary">def</name>
    <name type="ordered locus">HPSH_02850</name>
</gene>
<reference key="1">
    <citation type="submission" date="2008-05" db="EMBL/GenBank/DDBJ databases">
        <title>Genome sequence of Helicobacter pylori from the remote Amazon: traces of Asian ancestry of the first Americans.</title>
        <authorList>
            <person name="Kersulyte D."/>
            <person name="Kalia A."/>
            <person name="Gilman R.H."/>
            <person name="Berg D.E."/>
        </authorList>
    </citation>
    <scope>NUCLEOTIDE SEQUENCE [LARGE SCALE GENOMIC DNA]</scope>
    <source>
        <strain>Shi470</strain>
    </source>
</reference>
<name>DEF_HELPS</name>
<proteinExistence type="inferred from homology"/>
<keyword id="KW-0378">Hydrolase</keyword>
<keyword id="KW-0408">Iron</keyword>
<keyword id="KW-0479">Metal-binding</keyword>
<keyword id="KW-0648">Protein biosynthesis</keyword>
<comment type="function">
    <text evidence="1">Removes the formyl group from the N-terminal Met of newly synthesized proteins. Requires at least a dipeptide for an efficient rate of reaction. N-terminal L-methionine is a prerequisite for activity but the enzyme has broad specificity at other positions.</text>
</comment>
<comment type="catalytic activity">
    <reaction evidence="1">
        <text>N-terminal N-formyl-L-methionyl-[peptide] + H2O = N-terminal L-methionyl-[peptide] + formate</text>
        <dbReference type="Rhea" id="RHEA:24420"/>
        <dbReference type="Rhea" id="RHEA-COMP:10639"/>
        <dbReference type="Rhea" id="RHEA-COMP:10640"/>
        <dbReference type="ChEBI" id="CHEBI:15377"/>
        <dbReference type="ChEBI" id="CHEBI:15740"/>
        <dbReference type="ChEBI" id="CHEBI:49298"/>
        <dbReference type="ChEBI" id="CHEBI:64731"/>
        <dbReference type="EC" id="3.5.1.88"/>
    </reaction>
</comment>
<comment type="cofactor">
    <cofactor evidence="1">
        <name>Fe(2+)</name>
        <dbReference type="ChEBI" id="CHEBI:29033"/>
    </cofactor>
    <text evidence="1">Binds 1 Fe(2+) ion.</text>
</comment>
<comment type="similarity">
    <text evidence="1">Belongs to the polypeptide deformylase family.</text>
</comment>
<sequence>MALLEIIHYPSKILRTISKEIVSFDSKLHQQLDDMRETMIASEGIGLAAIQVGLPLRMLIINLPREDGVQHKEDCLEIINPKFIETKGTIMYKEGCLSVPGFYEEVERFEKVKIEYQNRFAEVKVLEASELLAVAIQHEIDHLNGVLFVDKLSILKRKKFEKELKELNKNPKSKS</sequence>
<dbReference type="EC" id="3.5.1.88" evidence="1"/>
<dbReference type="EMBL" id="CP001072">
    <property type="protein sequence ID" value="ACD48020.1"/>
    <property type="molecule type" value="Genomic_DNA"/>
</dbReference>
<dbReference type="RefSeq" id="WP_001185796.1">
    <property type="nucleotide sequence ID" value="NC_010698.2"/>
</dbReference>
<dbReference type="SMR" id="B2UT38"/>
<dbReference type="KEGG" id="hps:HPSH_02850"/>
<dbReference type="HOGENOM" id="CLU_061901_2_0_7"/>
<dbReference type="GO" id="GO:0046872">
    <property type="term" value="F:metal ion binding"/>
    <property type="evidence" value="ECO:0007669"/>
    <property type="project" value="UniProtKB-KW"/>
</dbReference>
<dbReference type="GO" id="GO:0042586">
    <property type="term" value="F:peptide deformylase activity"/>
    <property type="evidence" value="ECO:0007669"/>
    <property type="project" value="UniProtKB-UniRule"/>
</dbReference>
<dbReference type="GO" id="GO:0043686">
    <property type="term" value="P:co-translational protein modification"/>
    <property type="evidence" value="ECO:0007669"/>
    <property type="project" value="TreeGrafter"/>
</dbReference>
<dbReference type="GO" id="GO:0006412">
    <property type="term" value="P:translation"/>
    <property type="evidence" value="ECO:0007669"/>
    <property type="project" value="UniProtKB-UniRule"/>
</dbReference>
<dbReference type="CDD" id="cd00487">
    <property type="entry name" value="Pep_deformylase"/>
    <property type="match status" value="1"/>
</dbReference>
<dbReference type="FunFam" id="3.90.45.10:FF:000008">
    <property type="entry name" value="Peptide deformylase"/>
    <property type="match status" value="1"/>
</dbReference>
<dbReference type="Gene3D" id="3.90.45.10">
    <property type="entry name" value="Peptide deformylase"/>
    <property type="match status" value="1"/>
</dbReference>
<dbReference type="HAMAP" id="MF_00163">
    <property type="entry name" value="Pep_deformylase"/>
    <property type="match status" value="1"/>
</dbReference>
<dbReference type="InterPro" id="IPR023635">
    <property type="entry name" value="Peptide_deformylase"/>
</dbReference>
<dbReference type="InterPro" id="IPR036821">
    <property type="entry name" value="Peptide_deformylase_sf"/>
</dbReference>
<dbReference type="NCBIfam" id="TIGR00079">
    <property type="entry name" value="pept_deformyl"/>
    <property type="match status" value="1"/>
</dbReference>
<dbReference type="NCBIfam" id="NF001159">
    <property type="entry name" value="PRK00150.1-3"/>
    <property type="match status" value="1"/>
</dbReference>
<dbReference type="PANTHER" id="PTHR10458">
    <property type="entry name" value="PEPTIDE DEFORMYLASE"/>
    <property type="match status" value="1"/>
</dbReference>
<dbReference type="PANTHER" id="PTHR10458:SF22">
    <property type="entry name" value="PEPTIDE DEFORMYLASE"/>
    <property type="match status" value="1"/>
</dbReference>
<dbReference type="Pfam" id="PF01327">
    <property type="entry name" value="Pep_deformylase"/>
    <property type="match status" value="1"/>
</dbReference>
<dbReference type="PIRSF" id="PIRSF004749">
    <property type="entry name" value="Pep_def"/>
    <property type="match status" value="1"/>
</dbReference>
<dbReference type="PRINTS" id="PR01576">
    <property type="entry name" value="PDEFORMYLASE"/>
</dbReference>
<dbReference type="SUPFAM" id="SSF56420">
    <property type="entry name" value="Peptide deformylase"/>
    <property type="match status" value="1"/>
</dbReference>
<accession>B2UT38</accession>
<organism>
    <name type="scientific">Helicobacter pylori (strain Shi470)</name>
    <dbReference type="NCBI Taxonomy" id="512562"/>
    <lineage>
        <taxon>Bacteria</taxon>
        <taxon>Pseudomonadati</taxon>
        <taxon>Campylobacterota</taxon>
        <taxon>Epsilonproteobacteria</taxon>
        <taxon>Campylobacterales</taxon>
        <taxon>Helicobacteraceae</taxon>
        <taxon>Helicobacter</taxon>
    </lineage>
</organism>
<evidence type="ECO:0000255" key="1">
    <source>
        <dbReference type="HAMAP-Rule" id="MF_00163"/>
    </source>
</evidence>
<protein>
    <recommendedName>
        <fullName evidence="1">Peptide deformylase</fullName>
        <shortName evidence="1">PDF</shortName>
        <ecNumber evidence="1">3.5.1.88</ecNumber>
    </recommendedName>
    <alternativeName>
        <fullName evidence="1">Polypeptide deformylase</fullName>
    </alternativeName>
</protein>